<protein>
    <recommendedName>
        <fullName evidence="1">1-deoxy-D-xylulose-5-phosphate synthase</fullName>
        <ecNumber evidence="1">2.2.1.7</ecNumber>
    </recommendedName>
    <alternativeName>
        <fullName evidence="1">1-deoxyxylulose-5-phosphate synthase</fullName>
        <shortName evidence="1">DXP synthase</shortName>
        <shortName evidence="1">DXPS</shortName>
    </alternativeName>
</protein>
<dbReference type="EC" id="2.2.1.7" evidence="1"/>
<dbReference type="EMBL" id="AE010300">
    <property type="protein sequence ID" value="AAN50483.1"/>
    <property type="molecule type" value="Genomic_DNA"/>
</dbReference>
<dbReference type="RefSeq" id="NP_713465.1">
    <property type="nucleotide sequence ID" value="NC_004342.2"/>
</dbReference>
<dbReference type="RefSeq" id="WP_001183723.1">
    <property type="nucleotide sequence ID" value="NC_004342.2"/>
</dbReference>
<dbReference type="SMR" id="Q8F153"/>
<dbReference type="FunCoup" id="Q8F153">
    <property type="interactions" value="454"/>
</dbReference>
<dbReference type="STRING" id="189518.LA_3285"/>
<dbReference type="PaxDb" id="189518-LA_3285"/>
<dbReference type="EnsemblBacteria" id="AAN50483">
    <property type="protein sequence ID" value="AAN50483"/>
    <property type="gene ID" value="LA_3285"/>
</dbReference>
<dbReference type="GeneID" id="61144195"/>
<dbReference type="KEGG" id="lil:LA_3285"/>
<dbReference type="PATRIC" id="fig|189518.3.peg.3254"/>
<dbReference type="HOGENOM" id="CLU_009227_1_4_12"/>
<dbReference type="InParanoid" id="Q8F153"/>
<dbReference type="OrthoDB" id="9803371at2"/>
<dbReference type="UniPathway" id="UPA00064">
    <property type="reaction ID" value="UER00091"/>
</dbReference>
<dbReference type="Proteomes" id="UP000001408">
    <property type="component" value="Chromosome I"/>
</dbReference>
<dbReference type="GO" id="GO:0005829">
    <property type="term" value="C:cytosol"/>
    <property type="evidence" value="ECO:0000318"/>
    <property type="project" value="GO_Central"/>
</dbReference>
<dbReference type="GO" id="GO:0008661">
    <property type="term" value="F:1-deoxy-D-xylulose-5-phosphate synthase activity"/>
    <property type="evidence" value="ECO:0000318"/>
    <property type="project" value="GO_Central"/>
</dbReference>
<dbReference type="GO" id="GO:0000287">
    <property type="term" value="F:magnesium ion binding"/>
    <property type="evidence" value="ECO:0007669"/>
    <property type="project" value="UniProtKB-UniRule"/>
</dbReference>
<dbReference type="GO" id="GO:0030976">
    <property type="term" value="F:thiamine pyrophosphate binding"/>
    <property type="evidence" value="ECO:0007669"/>
    <property type="project" value="UniProtKB-UniRule"/>
</dbReference>
<dbReference type="GO" id="GO:0052865">
    <property type="term" value="P:1-deoxy-D-xylulose 5-phosphate biosynthetic process"/>
    <property type="evidence" value="ECO:0007669"/>
    <property type="project" value="UniProtKB-UniPathway"/>
</dbReference>
<dbReference type="GO" id="GO:0019288">
    <property type="term" value="P:isopentenyl diphosphate biosynthetic process, methylerythritol 4-phosphate pathway"/>
    <property type="evidence" value="ECO:0000318"/>
    <property type="project" value="GO_Central"/>
</dbReference>
<dbReference type="GO" id="GO:0016114">
    <property type="term" value="P:terpenoid biosynthetic process"/>
    <property type="evidence" value="ECO:0007669"/>
    <property type="project" value="UniProtKB-UniRule"/>
</dbReference>
<dbReference type="GO" id="GO:0009228">
    <property type="term" value="P:thiamine biosynthetic process"/>
    <property type="evidence" value="ECO:0007669"/>
    <property type="project" value="UniProtKB-UniRule"/>
</dbReference>
<dbReference type="CDD" id="cd02007">
    <property type="entry name" value="TPP_DXS"/>
    <property type="match status" value="1"/>
</dbReference>
<dbReference type="CDD" id="cd07033">
    <property type="entry name" value="TPP_PYR_DXS_TK_like"/>
    <property type="match status" value="1"/>
</dbReference>
<dbReference type="FunFam" id="3.40.50.970:FF:000060">
    <property type="entry name" value="1-deoxy-D-xylulose-5-phosphate synthase"/>
    <property type="match status" value="1"/>
</dbReference>
<dbReference type="Gene3D" id="3.40.50.920">
    <property type="match status" value="1"/>
</dbReference>
<dbReference type="Gene3D" id="3.40.50.970">
    <property type="match status" value="2"/>
</dbReference>
<dbReference type="HAMAP" id="MF_00315">
    <property type="entry name" value="DXP_synth"/>
    <property type="match status" value="1"/>
</dbReference>
<dbReference type="InterPro" id="IPR005477">
    <property type="entry name" value="Dxylulose-5-P_synthase"/>
</dbReference>
<dbReference type="InterPro" id="IPR029061">
    <property type="entry name" value="THDP-binding"/>
</dbReference>
<dbReference type="InterPro" id="IPR009014">
    <property type="entry name" value="Transketo_C/PFOR_II"/>
</dbReference>
<dbReference type="InterPro" id="IPR005475">
    <property type="entry name" value="Transketolase-like_Pyr-bd"/>
</dbReference>
<dbReference type="InterPro" id="IPR033248">
    <property type="entry name" value="Transketolase_C"/>
</dbReference>
<dbReference type="InterPro" id="IPR049557">
    <property type="entry name" value="Transketolase_CS"/>
</dbReference>
<dbReference type="NCBIfam" id="TIGR00204">
    <property type="entry name" value="dxs"/>
    <property type="match status" value="1"/>
</dbReference>
<dbReference type="NCBIfam" id="NF003933">
    <property type="entry name" value="PRK05444.2-2"/>
    <property type="match status" value="1"/>
</dbReference>
<dbReference type="PANTHER" id="PTHR43322">
    <property type="entry name" value="1-D-DEOXYXYLULOSE 5-PHOSPHATE SYNTHASE-RELATED"/>
    <property type="match status" value="1"/>
</dbReference>
<dbReference type="PANTHER" id="PTHR43322:SF5">
    <property type="entry name" value="1-DEOXY-D-XYLULOSE-5-PHOSPHATE SYNTHASE, CHLOROPLASTIC"/>
    <property type="match status" value="1"/>
</dbReference>
<dbReference type="Pfam" id="PF13292">
    <property type="entry name" value="DXP_synthase_N"/>
    <property type="match status" value="1"/>
</dbReference>
<dbReference type="Pfam" id="PF02779">
    <property type="entry name" value="Transket_pyr"/>
    <property type="match status" value="1"/>
</dbReference>
<dbReference type="Pfam" id="PF02780">
    <property type="entry name" value="Transketolase_C"/>
    <property type="match status" value="1"/>
</dbReference>
<dbReference type="SMART" id="SM00861">
    <property type="entry name" value="Transket_pyr"/>
    <property type="match status" value="1"/>
</dbReference>
<dbReference type="SUPFAM" id="SSF52518">
    <property type="entry name" value="Thiamin diphosphate-binding fold (THDP-binding)"/>
    <property type="match status" value="2"/>
</dbReference>
<dbReference type="SUPFAM" id="SSF52922">
    <property type="entry name" value="TK C-terminal domain-like"/>
    <property type="match status" value="1"/>
</dbReference>
<dbReference type="PROSITE" id="PS00801">
    <property type="entry name" value="TRANSKETOLASE_1"/>
    <property type="match status" value="1"/>
</dbReference>
<keyword id="KW-0414">Isoprene biosynthesis</keyword>
<keyword id="KW-0460">Magnesium</keyword>
<keyword id="KW-0479">Metal-binding</keyword>
<keyword id="KW-1185">Reference proteome</keyword>
<keyword id="KW-0784">Thiamine biosynthesis</keyword>
<keyword id="KW-0786">Thiamine pyrophosphate</keyword>
<keyword id="KW-0808">Transferase</keyword>
<reference key="1">
    <citation type="journal article" date="2003" name="Nature">
        <title>Unique physiological and pathogenic features of Leptospira interrogans revealed by whole-genome sequencing.</title>
        <authorList>
            <person name="Ren S.-X."/>
            <person name="Fu G."/>
            <person name="Jiang X.-G."/>
            <person name="Zeng R."/>
            <person name="Miao Y.-G."/>
            <person name="Xu H."/>
            <person name="Zhang Y.-X."/>
            <person name="Xiong H."/>
            <person name="Lu G."/>
            <person name="Lu L.-F."/>
            <person name="Jiang H.-Q."/>
            <person name="Jia J."/>
            <person name="Tu Y.-F."/>
            <person name="Jiang J.-X."/>
            <person name="Gu W.-Y."/>
            <person name="Zhang Y.-Q."/>
            <person name="Cai Z."/>
            <person name="Sheng H.-H."/>
            <person name="Yin H.-F."/>
            <person name="Zhang Y."/>
            <person name="Zhu G.-F."/>
            <person name="Wan M."/>
            <person name="Huang H.-L."/>
            <person name="Qian Z."/>
            <person name="Wang S.-Y."/>
            <person name="Ma W."/>
            <person name="Yao Z.-J."/>
            <person name="Shen Y."/>
            <person name="Qiang B.-Q."/>
            <person name="Xia Q.-C."/>
            <person name="Guo X.-K."/>
            <person name="Danchin A."/>
            <person name="Saint Girons I."/>
            <person name="Somerville R.L."/>
            <person name="Wen Y.-M."/>
            <person name="Shi M.-H."/>
            <person name="Chen Z."/>
            <person name="Xu J.-G."/>
            <person name="Zhao G.-P."/>
        </authorList>
    </citation>
    <scope>NUCLEOTIDE SEQUENCE [LARGE SCALE GENOMIC DNA]</scope>
    <source>
        <strain>56601</strain>
    </source>
</reference>
<proteinExistence type="inferred from homology"/>
<organism>
    <name type="scientific">Leptospira interrogans serogroup Icterohaemorrhagiae serovar Lai (strain 56601)</name>
    <dbReference type="NCBI Taxonomy" id="189518"/>
    <lineage>
        <taxon>Bacteria</taxon>
        <taxon>Pseudomonadati</taxon>
        <taxon>Spirochaetota</taxon>
        <taxon>Spirochaetia</taxon>
        <taxon>Leptospirales</taxon>
        <taxon>Leptospiraceae</taxon>
        <taxon>Leptospira</taxon>
    </lineage>
</organism>
<sequence>MQQELTLLDRINYPAELRNIPLEKLPQICKEVRNYIIDTLSGIGGHFASNLGVVELTVALHYVFDTPKDRLVWDVGHQTYPHKILTGRKDKLNTVRKFNGLSGFPKREESPYDLYNTGHAGTSISQALGEAAARDLVKENYNVVAIIGDASIATGMALEAMNHAGHLKKDMIVILNDNYMSISKNVGSISNYLNNIITSHFYNHWKRVFYTFLKWLPIIGPATERFFKKVEKGFKDVLTPGGLFEDLGFGYIGPEDGHDVIRLVKMLEKVKKMKGPILLHIITQKGKGYDPAERDPIKYHGVTPFRKEDGAMDSGDTSKIAYSKIVGKMLAILTETNPKIAAITPAMIEGSGLKEYAEKYPEHLFDVGIAEQHSVAFAGAMTNGNIIPYMCIYSTFLTRAMDQLVQDVSLMNLPVRFVIDRAGCVGPDGETHQGLFDLGYLLGLPNMDVFVPSNGQDLIDALRWMEKYDKSPVAIRFPKSSVDLKTLDFYKETELQPGTFRVFKRGTDVALISIGSMIDEAKKASERLENEGLSVTLIDLVWLRPLGAEALNEELVNVRCFVILDESYIDSGVTGYLLNRMTRENLSKYIKTFGFPPEPIHHGERKEVFQKYRLDGESIAEQVAAVLKKNLIKP</sequence>
<comment type="function">
    <text evidence="1">Catalyzes the acyloin condensation reaction between C atoms 2 and 3 of pyruvate and glyceraldehyde 3-phosphate to yield 1-deoxy-D-xylulose-5-phosphate (DXP).</text>
</comment>
<comment type="catalytic activity">
    <reaction evidence="1">
        <text>D-glyceraldehyde 3-phosphate + pyruvate + H(+) = 1-deoxy-D-xylulose 5-phosphate + CO2</text>
        <dbReference type="Rhea" id="RHEA:12605"/>
        <dbReference type="ChEBI" id="CHEBI:15361"/>
        <dbReference type="ChEBI" id="CHEBI:15378"/>
        <dbReference type="ChEBI" id="CHEBI:16526"/>
        <dbReference type="ChEBI" id="CHEBI:57792"/>
        <dbReference type="ChEBI" id="CHEBI:59776"/>
        <dbReference type="EC" id="2.2.1.7"/>
    </reaction>
</comment>
<comment type="cofactor">
    <cofactor evidence="1">
        <name>Mg(2+)</name>
        <dbReference type="ChEBI" id="CHEBI:18420"/>
    </cofactor>
    <text evidence="1">Binds 1 Mg(2+) ion per subunit.</text>
</comment>
<comment type="cofactor">
    <cofactor evidence="1">
        <name>thiamine diphosphate</name>
        <dbReference type="ChEBI" id="CHEBI:58937"/>
    </cofactor>
    <text evidence="1">Binds 1 thiamine pyrophosphate per subunit.</text>
</comment>
<comment type="pathway">
    <text evidence="1">Metabolic intermediate biosynthesis; 1-deoxy-D-xylulose 5-phosphate biosynthesis; 1-deoxy-D-xylulose 5-phosphate from D-glyceraldehyde 3-phosphate and pyruvate: step 1/1.</text>
</comment>
<comment type="subunit">
    <text evidence="1">Homodimer.</text>
</comment>
<comment type="similarity">
    <text evidence="1">Belongs to the transketolase family. DXPS subfamily.</text>
</comment>
<feature type="chain" id="PRO_0000189125" description="1-deoxy-D-xylulose-5-phosphate synthase">
    <location>
        <begin position="1"/>
        <end position="634"/>
    </location>
</feature>
<feature type="binding site" evidence="1">
    <location>
        <position position="77"/>
    </location>
    <ligand>
        <name>thiamine diphosphate</name>
        <dbReference type="ChEBI" id="CHEBI:58937"/>
    </ligand>
</feature>
<feature type="binding site" evidence="1">
    <location>
        <begin position="118"/>
        <end position="120"/>
    </location>
    <ligand>
        <name>thiamine diphosphate</name>
        <dbReference type="ChEBI" id="CHEBI:58937"/>
    </ligand>
</feature>
<feature type="binding site" evidence="1">
    <location>
        <position position="149"/>
    </location>
    <ligand>
        <name>Mg(2+)</name>
        <dbReference type="ChEBI" id="CHEBI:18420"/>
    </ligand>
</feature>
<feature type="binding site" evidence="1">
    <location>
        <begin position="150"/>
        <end position="151"/>
    </location>
    <ligand>
        <name>thiamine diphosphate</name>
        <dbReference type="ChEBI" id="CHEBI:58937"/>
    </ligand>
</feature>
<feature type="binding site" evidence="1">
    <location>
        <position position="178"/>
    </location>
    <ligand>
        <name>Mg(2+)</name>
        <dbReference type="ChEBI" id="CHEBI:18420"/>
    </ligand>
</feature>
<feature type="binding site" evidence="1">
    <location>
        <position position="178"/>
    </location>
    <ligand>
        <name>thiamine diphosphate</name>
        <dbReference type="ChEBI" id="CHEBI:58937"/>
    </ligand>
</feature>
<feature type="binding site" evidence="1">
    <location>
        <position position="289"/>
    </location>
    <ligand>
        <name>thiamine diphosphate</name>
        <dbReference type="ChEBI" id="CHEBI:58937"/>
    </ligand>
</feature>
<feature type="binding site" evidence="1">
    <location>
        <position position="371"/>
    </location>
    <ligand>
        <name>thiamine diphosphate</name>
        <dbReference type="ChEBI" id="CHEBI:58937"/>
    </ligand>
</feature>
<evidence type="ECO:0000255" key="1">
    <source>
        <dbReference type="HAMAP-Rule" id="MF_00315"/>
    </source>
</evidence>
<accession>Q8F153</accession>
<name>DXS_LEPIN</name>
<gene>
    <name evidence="1" type="primary">dxs</name>
    <name type="ordered locus">LA_3285</name>
</gene>